<dbReference type="EMBL" id="AY252101">
    <property type="protein sequence ID" value="AAP86970.1"/>
    <property type="molecule type" value="mRNA"/>
</dbReference>
<dbReference type="CCDS" id="CCDS24836.1"/>
<dbReference type="RefSeq" id="NP_081936.1">
    <property type="nucleotide sequence ID" value="NM_027660.1"/>
</dbReference>
<dbReference type="PDB" id="8I7O">
    <property type="method" value="EM"/>
    <property type="resolution" value="4.50 A"/>
    <property type="chains" value="C2/C3/C4/C7/C8/Cb/Cc=1-490"/>
</dbReference>
<dbReference type="PDB" id="8I7R">
    <property type="method" value="EM"/>
    <property type="resolution" value="6.50 A"/>
    <property type="chains" value="C1/C2/C3/C4/C5/C6/C7/C8/C9/Ca/Cb/Cc/Cd=1-490"/>
</dbReference>
<dbReference type="PDB" id="8IYJ">
    <property type="method" value="EM"/>
    <property type="resolution" value="3.50 A"/>
    <property type="chains" value="C0/C1/C2/C3/C4/C5/C6/S0/S1/S2/S3/S4/S5/S6/S7/S8/S9=1-490"/>
</dbReference>
<dbReference type="PDB" id="8TO0">
    <property type="method" value="EM"/>
    <property type="resolution" value="7.70 A"/>
    <property type="chains" value="AC/AD/AE/AF/AG/AH/AI/AJ/AK/AL/BI/BJ/BK/BL/BM=1-490"/>
</dbReference>
<dbReference type="PDBsum" id="8I7O"/>
<dbReference type="PDBsum" id="8I7R"/>
<dbReference type="PDBsum" id="8IYJ"/>
<dbReference type="PDBsum" id="8TO0"/>
<dbReference type="EMDB" id="EMD-35229"/>
<dbReference type="EMDB" id="EMD-35230"/>
<dbReference type="EMDB" id="EMD-35823"/>
<dbReference type="EMDB" id="EMD-41431"/>
<dbReference type="SMR" id="Q6X6Z7"/>
<dbReference type="BioGRID" id="214445">
    <property type="interactions" value="1"/>
</dbReference>
<dbReference type="FunCoup" id="Q6X6Z7">
    <property type="interactions" value="90"/>
</dbReference>
<dbReference type="STRING" id="10090.ENSMUSP00000042063"/>
<dbReference type="GlyCosmos" id="Q6X6Z7">
    <property type="glycosylation" value="7 sites, No reported glycans"/>
</dbReference>
<dbReference type="GlyGen" id="Q6X6Z7">
    <property type="glycosylation" value="7 sites"/>
</dbReference>
<dbReference type="iPTMnet" id="Q6X6Z7"/>
<dbReference type="PhosphoSitePlus" id="Q6X6Z7"/>
<dbReference type="PaxDb" id="10090-ENSMUSP00000042063"/>
<dbReference type="ProteomicsDB" id="262974"/>
<dbReference type="Antibodypedia" id="25125">
    <property type="antibodies" value="142 antibodies from 20 providers"/>
</dbReference>
<dbReference type="DNASU" id="71062"/>
<dbReference type="Ensembl" id="ENSMUST00000035732.5">
    <property type="protein sequence ID" value="ENSMUSP00000042063.5"/>
    <property type="gene ID" value="ENSMUSG00000042189.6"/>
</dbReference>
<dbReference type="GeneID" id="71062"/>
<dbReference type="KEGG" id="mmu:71062"/>
<dbReference type="UCSC" id="uc007jkl.1">
    <property type="organism name" value="mouse"/>
</dbReference>
<dbReference type="AGR" id="MGI:1918312"/>
<dbReference type="CTD" id="64518"/>
<dbReference type="MGI" id="MGI:1918312">
    <property type="gene designation" value="Tekt3"/>
</dbReference>
<dbReference type="VEuPathDB" id="HostDB:ENSMUSG00000042189"/>
<dbReference type="eggNOG" id="KOG2685">
    <property type="taxonomic scope" value="Eukaryota"/>
</dbReference>
<dbReference type="GeneTree" id="ENSGT00950000182894"/>
<dbReference type="HOGENOM" id="CLU_033588_2_1_1"/>
<dbReference type="InParanoid" id="Q6X6Z7"/>
<dbReference type="OMA" id="CMEPISG"/>
<dbReference type="OrthoDB" id="9886517at2759"/>
<dbReference type="PhylomeDB" id="Q6X6Z7"/>
<dbReference type="TreeFam" id="TF320754"/>
<dbReference type="BioGRID-ORCS" id="71062">
    <property type="hits" value="0 hits in 77 CRISPR screens"/>
</dbReference>
<dbReference type="ChiTaRS" id="Tekt3">
    <property type="organism name" value="mouse"/>
</dbReference>
<dbReference type="PRO" id="PR:Q6X6Z7"/>
<dbReference type="Proteomes" id="UP000000589">
    <property type="component" value="Chromosome 11"/>
</dbReference>
<dbReference type="RNAct" id="Q6X6Z7">
    <property type="molecule type" value="protein"/>
</dbReference>
<dbReference type="Bgee" id="ENSMUSG00000042189">
    <property type="expression patterns" value="Expressed in seminiferous tubule of testis and 11 other cell types or tissues"/>
</dbReference>
<dbReference type="ExpressionAtlas" id="Q6X6Z7">
    <property type="expression patterns" value="baseline and differential"/>
</dbReference>
<dbReference type="GO" id="GO:0002080">
    <property type="term" value="C:acrosomal membrane"/>
    <property type="evidence" value="ECO:0000250"/>
    <property type="project" value="CAFA"/>
</dbReference>
<dbReference type="GO" id="GO:0001669">
    <property type="term" value="C:acrosomal vesicle"/>
    <property type="evidence" value="ECO:0000314"/>
    <property type="project" value="UniProtKB"/>
</dbReference>
<dbReference type="GO" id="GO:0160111">
    <property type="term" value="C:axonemal A tubule inner sheath"/>
    <property type="evidence" value="ECO:0000314"/>
    <property type="project" value="UniProtKB"/>
</dbReference>
<dbReference type="GO" id="GO:0005879">
    <property type="term" value="C:axonemal microtubule"/>
    <property type="evidence" value="ECO:0000250"/>
    <property type="project" value="UniProtKB"/>
</dbReference>
<dbReference type="GO" id="GO:0005737">
    <property type="term" value="C:cytoplasm"/>
    <property type="evidence" value="ECO:0000314"/>
    <property type="project" value="MGI"/>
</dbReference>
<dbReference type="GO" id="GO:0002081">
    <property type="term" value="C:outer acrosomal membrane"/>
    <property type="evidence" value="ECO:0007669"/>
    <property type="project" value="UniProtKB-SubCell"/>
</dbReference>
<dbReference type="GO" id="GO:0036126">
    <property type="term" value="C:sperm flagellum"/>
    <property type="evidence" value="ECO:0000314"/>
    <property type="project" value="UniProtKB"/>
</dbReference>
<dbReference type="GO" id="GO:0060271">
    <property type="term" value="P:cilium assembly"/>
    <property type="evidence" value="ECO:0000315"/>
    <property type="project" value="UniProtKB"/>
</dbReference>
<dbReference type="GO" id="GO:0030317">
    <property type="term" value="P:flagellated sperm motility"/>
    <property type="evidence" value="ECO:0000314"/>
    <property type="project" value="UniProtKB"/>
</dbReference>
<dbReference type="GO" id="GO:0060378">
    <property type="term" value="P:regulation of brood size"/>
    <property type="evidence" value="ECO:0000316"/>
    <property type="project" value="UniProtKB"/>
</dbReference>
<dbReference type="InterPro" id="IPR048256">
    <property type="entry name" value="Tektin-like"/>
</dbReference>
<dbReference type="InterPro" id="IPR000435">
    <property type="entry name" value="Tektins"/>
</dbReference>
<dbReference type="PANTHER" id="PTHR19960">
    <property type="entry name" value="TEKTIN"/>
    <property type="match status" value="1"/>
</dbReference>
<dbReference type="PANTHER" id="PTHR19960:SF24">
    <property type="entry name" value="TEKTIN-3"/>
    <property type="match status" value="1"/>
</dbReference>
<dbReference type="Pfam" id="PF03148">
    <property type="entry name" value="Tektin"/>
    <property type="match status" value="1"/>
</dbReference>
<dbReference type="PRINTS" id="PR00511">
    <property type="entry name" value="TEKTIN"/>
</dbReference>
<organism>
    <name type="scientific">Mus musculus</name>
    <name type="common">Mouse</name>
    <dbReference type="NCBI Taxonomy" id="10090"/>
    <lineage>
        <taxon>Eukaryota</taxon>
        <taxon>Metazoa</taxon>
        <taxon>Chordata</taxon>
        <taxon>Craniata</taxon>
        <taxon>Vertebrata</taxon>
        <taxon>Euteleostomi</taxon>
        <taxon>Mammalia</taxon>
        <taxon>Eutheria</taxon>
        <taxon>Euarchontoglires</taxon>
        <taxon>Glires</taxon>
        <taxon>Rodentia</taxon>
        <taxon>Myomorpha</taxon>
        <taxon>Muroidea</taxon>
        <taxon>Muridae</taxon>
        <taxon>Murinae</taxon>
        <taxon>Mus</taxon>
        <taxon>Mus</taxon>
    </lineage>
</organism>
<keyword id="KW-0002">3D-structure</keyword>
<keyword id="KW-0966">Cell projection</keyword>
<keyword id="KW-0969">Cilium</keyword>
<keyword id="KW-0175">Coiled coil</keyword>
<keyword id="KW-0963">Cytoplasm</keyword>
<keyword id="KW-0968">Cytoplasmic vesicle</keyword>
<keyword id="KW-0206">Cytoskeleton</keyword>
<keyword id="KW-0282">Flagellum</keyword>
<keyword id="KW-0325">Glycoprotein</keyword>
<keyword id="KW-0472">Membrane</keyword>
<keyword id="KW-1185">Reference proteome</keyword>
<keyword id="KW-0832">Ubl conjugation</keyword>
<proteinExistence type="evidence at protein level"/>
<evidence type="ECO:0000250" key="1">
    <source>
        <dbReference type="UniProtKB" id="A6H782"/>
    </source>
</evidence>
<evidence type="ECO:0000250" key="2">
    <source>
        <dbReference type="UniProtKB" id="Q4V8G8"/>
    </source>
</evidence>
<evidence type="ECO:0000250" key="3">
    <source>
        <dbReference type="UniProtKB" id="Q9BXF9"/>
    </source>
</evidence>
<evidence type="ECO:0000255" key="4"/>
<evidence type="ECO:0000269" key="5">
    <source>
    </source>
</evidence>
<evidence type="ECO:0000269" key="6">
    <source>
    </source>
</evidence>
<evidence type="ECO:0000269" key="7">
    <source>
    </source>
</evidence>
<evidence type="ECO:0000269" key="8">
    <source>
    </source>
</evidence>
<evidence type="ECO:0000269" key="9">
    <source>
    </source>
</evidence>
<evidence type="ECO:0000269" key="10">
    <source>
    </source>
</evidence>
<evidence type="ECO:0000269" key="11">
    <source>
    </source>
</evidence>
<evidence type="ECO:0000269" key="12">
    <source>
    </source>
</evidence>
<evidence type="ECO:0000305" key="13"/>
<evidence type="ECO:0007744" key="14">
    <source>
        <dbReference type="PDB" id="8I7O"/>
    </source>
</evidence>
<evidence type="ECO:0007744" key="15">
    <source>
        <dbReference type="PDB" id="8I7R"/>
    </source>
</evidence>
<evidence type="ECO:0007744" key="16">
    <source>
        <dbReference type="PDB" id="8IYJ"/>
    </source>
</evidence>
<evidence type="ECO:0007744" key="17">
    <source>
        <dbReference type="PDB" id="8TO0"/>
    </source>
</evidence>
<name>TEKT3_MOUSE</name>
<feature type="chain" id="PRO_0000184569" description="Tektin-3">
    <location>
        <begin position="1"/>
        <end position="490"/>
    </location>
</feature>
<feature type="coiled-coil region" evidence="4">
    <location>
        <begin position="415"/>
        <end position="461"/>
    </location>
</feature>
<feature type="glycosylation site" description="O-linked (GalNAc...) threonine" evidence="4">
    <location>
        <position position="7"/>
    </location>
</feature>
<feature type="glycosylation site" description="O-linked (GalNAc...) threonine" evidence="4">
    <location>
        <position position="9"/>
    </location>
</feature>
<feature type="glycosylation site" description="O-linked (GalNAc...) threonine" evidence="4">
    <location>
        <position position="11"/>
    </location>
</feature>
<feature type="glycosylation site" description="N-linked (GlcNAc...) asparagine" evidence="4">
    <location>
        <position position="41"/>
    </location>
</feature>
<feature type="glycosylation site" description="N-linked (GlcNAc...) asparagine" evidence="4">
    <location>
        <position position="86"/>
    </location>
</feature>
<feature type="glycosylation site" description="N-linked (GlcNAc...) asparagine" evidence="4">
    <location>
        <position position="111"/>
    </location>
</feature>
<feature type="glycosylation site" description="N-linked (GlcNAc...) asparagine" evidence="4">
    <location>
        <position position="276"/>
    </location>
</feature>
<reference key="1">
    <citation type="journal article" date="2004" name="Mol. Reprod. Dev.">
        <title>Tektin3 encodes an evolutionarily conserved putative testicular microtubules-related protein expressed preferentially in male germ cells.</title>
        <authorList>
            <person name="Roy A."/>
            <person name="Yan W."/>
            <person name="Burns K.H."/>
            <person name="Matzuk M.M."/>
        </authorList>
    </citation>
    <scope>NUCLEOTIDE SEQUENCE [MRNA]</scope>
    <scope>TISSUE SPECIFICITY</scope>
    <source>
        <strain>C57BL/6 X 129</strain>
        <tissue>Testis</tissue>
    </source>
</reference>
<reference key="2">
    <citation type="journal article" date="2009" name="Mol. Reprod. Dev.">
        <title>Tektin 3 is required for progressive sperm motility in mice.</title>
        <authorList>
            <person name="Roy A."/>
            <person name="Lin Y.-N."/>
            <person name="Agno J.E."/>
            <person name="DeMayo F.J."/>
            <person name="Matzuk M.M."/>
        </authorList>
    </citation>
    <scope>FUNCTION</scope>
    <scope>DISRUPTION PHENOTYPE</scope>
</reference>
<reference key="3">
    <citation type="journal article" date="2023" name="Hum. Mol. Genet.">
        <title>Bi-allelic human TEKT3 mutations cause male infertility with oligoasthenoteratozoospermia due to acrosomal hypoplasia and reduced progressive motility.</title>
        <authorList>
            <person name="Liu Y."/>
            <person name="Li Y."/>
            <person name="Meng L."/>
            <person name="Li K."/>
            <person name="Gao Y."/>
            <person name="Lv M."/>
            <person name="Guo R."/>
            <person name="Xu Y."/>
            <person name="Zhou P."/>
            <person name="Wei Z."/>
            <person name="He X."/>
            <person name="Cao Y."/>
            <person name="Wu H."/>
            <person name="Tan Y."/>
            <person name="Hua R."/>
        </authorList>
    </citation>
    <scope>TISSUE SPECIFICITY</scope>
</reference>
<reference key="4">
    <citation type="journal article" date="2023" name="J. Genet. Genomics">
        <title>Coiled-coil domain-containing 38 is required for acrosome biogenesis and fibrous sheath assembly in mice.</title>
        <authorList>
            <person name="Wang Y."/>
            <person name="Huang X."/>
            <person name="Sun G."/>
            <person name="Chen J."/>
            <person name="Wu B."/>
            <person name="Luo J."/>
            <person name="Tang S."/>
            <person name="Dai P."/>
            <person name="Zhang F."/>
            <person name="Li J."/>
            <person name="Wang L."/>
        </authorList>
    </citation>
    <scope>INTERACTION WITH CCDC38</scope>
</reference>
<reference key="5">
    <citation type="journal article" date="2022" name="Sci. Adv.">
        <title>Loss-of-function mutations in CEP78 cause male infertility in humans and mice.</title>
        <authorList>
            <person name="Zhang X."/>
            <person name="Zheng R."/>
            <person name="Liang C."/>
            <person name="Liu H."/>
            <person name="Zhang X."/>
            <person name="Ma Y."/>
            <person name="Liu M."/>
            <person name="Zhang W."/>
            <person name="Yang Y."/>
            <person name="Liu M."/>
            <person name="Jiang C."/>
            <person name="Ren Q."/>
            <person name="Wang Y."/>
            <person name="Chen S."/>
            <person name="Yang Y."/>
            <person name="Shen Y."/>
        </authorList>
    </citation>
    <scope>UBIQUITINATION</scope>
    <scope>DEUBIQUITINATION</scope>
</reference>
<reference evidence="16" key="6">
    <citation type="journal article" date="2023" name="Cell">
        <title>Structures of sperm flagellar doublet microtubules expand the genetic spectrum of male infertility.</title>
        <authorList>
            <person name="Zhou L."/>
            <person name="Liu H."/>
            <person name="Liu S."/>
            <person name="Yang X."/>
            <person name="Dong Y."/>
            <person name="Pan Y."/>
            <person name="Xiao Z."/>
            <person name="Zheng B."/>
            <person name="Sun Y."/>
            <person name="Huang P."/>
            <person name="Zhang X."/>
            <person name="Hu J."/>
            <person name="Sun R."/>
            <person name="Feng S."/>
            <person name="Zhu Y."/>
            <person name="Liu M."/>
            <person name="Gui M."/>
            <person name="Wu J."/>
        </authorList>
    </citation>
    <scope>STRUCTURE BY ELECTRON MICROSCOPY (3.50 ANGSTROMS) OF SPERM FLAGELLAR DOUBLET MICROTUBULES</scope>
    <scope>FUNCTION</scope>
    <scope>SUBCELLULAR LOCATION</scope>
    <scope>SUBUNIT</scope>
</reference>
<reference evidence="17" key="7">
    <citation type="journal article" date="2023" name="Cell">
        <title>De novo protein identification in mammalian sperm using in situ cryoelectron tomography and AlphaFold2 docking.</title>
        <authorList>
            <person name="Chen Z."/>
            <person name="Shiozaki M."/>
            <person name="Haas K.M."/>
            <person name="Skinner W.M."/>
            <person name="Zhao S."/>
            <person name="Guo C."/>
            <person name="Polacco B.J."/>
            <person name="Yu Z."/>
            <person name="Krogan N.J."/>
            <person name="Lishko P.V."/>
            <person name="Kaake R.M."/>
            <person name="Vale R.D."/>
            <person name="Agard D.A."/>
        </authorList>
    </citation>
    <scope>STRUCTURE BY ELECTRON MICROSCOPY (7.70 ANGSTROMS) OF SPERM FLAGELLAR DOUBLET MICROTUBULES</scope>
    <scope>FUNCTION</scope>
    <scope>SUBCELLULAR LOCATION</scope>
    <scope>SUBUNIT</scope>
</reference>
<reference evidence="14 15" key="8">
    <citation type="journal article" date="2023" name="Cell Discov.">
        <title>In-cell structural insight into the stability of sperm microtubule doublet.</title>
        <authorList>
            <person name="Tai L."/>
            <person name="Yin G."/>
            <person name="Huang X."/>
            <person name="Sun F."/>
            <person name="Zhu Y."/>
        </authorList>
    </citation>
    <scope>STRUCTURE BY ELECTRON MICROSCOPY (4.50 ANGSTROMS)</scope>
    <scope>FUNCTION</scope>
    <scope>SUBUNIT</scope>
    <scope>SUBCELLULAR LOCATION</scope>
</reference>
<comment type="function">
    <text evidence="6 9 11 12">Microtubule inner protein (MIP) part of the dynein-decorated doublet microtubules (DMTs) in cilia and flagellar axoneme (PubMed:37295417, PubMed:37865089, PubMed:37989994). Forms filamentous polymers in the walls of ciliary and flagellar microtubules (PubMed:37295417). Required for normal sperm mobility (PubMed:18951373).</text>
</comment>
<comment type="subunit">
    <text evidence="3 9 10 11 12">Microtubule inner protein component of sperm flagellar doublet microtubules (PubMed:37295417, PubMed:37865089, PubMed:37989994). Interacts with TEKT1, TEKT2, TEKT4 and TEKT5 (By similarity). Interacts with CCDC38 (PubMed:37709195).</text>
</comment>
<comment type="subcellular location">
    <subcellularLocation>
        <location evidence="1">Cytoplasm</location>
        <location evidence="1">Cytoskeleton</location>
        <location evidence="1">Cilium axoneme</location>
    </subcellularLocation>
    <subcellularLocation>
        <location evidence="9 11 12">Cytoplasm</location>
        <location evidence="9 11 12">Cytoskeleton</location>
        <location evidence="9 11 12">Flagellum axoneme</location>
    </subcellularLocation>
    <subcellularLocation>
        <location evidence="1 2">Cytoplasmic vesicle</location>
        <location evidence="1 2">Secretory vesicle</location>
        <location evidence="1 2">Acrosome outer membrane</location>
        <topology evidence="2">Peripheral membrane protein</topology>
    </subcellularLocation>
    <text evidence="1 2 3">In spermatozoa, preferentially localizes to the flagella, but also found in the head (By similarity). In the sperm flagellum, localizes to the periaxonemal region where it associates with the mitochondrial sheath and outer dense fibers (By similarity). Not detected in the central axonemal region of the flagellum (By similarity). Associates with the acrosome membrane in the equatorial segment of the sperm head (By similarity). Also detected just below the plasma membrane in the post-acrosomal region where it might localize to the postacrosomal dense lamina (By similarity). However, other studies report little or no expression in the postacrosomal region (By similarity). Translocates from the postacrosomal region to the equatorial segment after sperm activation (By similarity). Retained in the postacromal region, but not the equatorial segment, following the acrosome reaction (By similarity). Some studies report strong expression in the anterior cap region (By similarity). However, other studies report little or no expression in the acrosomal cap (By similarity).</text>
</comment>
<comment type="tissue specificity">
    <text evidence="5 8">Expressed preferentially in testis. Expressed predominantly in late pachytene spermatocytes and early round spermatids (PubMed:14735490). Expressed in spermatozoa (PubMed:36708031).</text>
</comment>
<comment type="PTM">
    <text evidence="1">N- and O-glycosylated.</text>
</comment>
<comment type="PTM">
    <text evidence="7">Ubiquitinated, leading to its degradation. Deubiquitinated by USP16, promoting its stability.</text>
</comment>
<comment type="PTM">
    <text evidence="1">May be proteolytically processed during the epididymal transit of spermatozoa.</text>
</comment>
<comment type="disruption phenotype">
    <text evidence="6">Sperm with reduced motility (47%) and forward progression and increased flagellar structural bending defects. However, normal fertility is maintained.</text>
</comment>
<comment type="similarity">
    <text evidence="13">Belongs to the tektin family.</text>
</comment>
<protein>
    <recommendedName>
        <fullName>Tektin-3</fullName>
    </recommendedName>
</protein>
<sequence>MELLGSTLTATYAHPPPASASFLPAIGTITSSYKDRFPHRNLTHSLSLPWRPNTYYKTAYNYPTLAPYSSRSQRVCESTMLPFVSNRTTFFTRYTPDDWYRSNLVSFQESNSSRHNSERLRVDTSRLIQDKYQQIRKTQAHSTQNLGERVNDLAFWKSEITHELDEMIGETNALTDIKRRLERGLIETEGPLQVSRECLFHREKRMGIDLVHDEAEKELLAEVDTILCCQERMRQHLDKANAQLASDRSAQHELEKDLSDKQAALRIDDKCQHLRNTSEGVSYFRGVERVDATVSVPETWAKFTDDNVLRSQSERAASAKLREETENLLIVTANEMWNQFNKVNLAFTNRIAETVDAKNKIHTHLTKTLQEIFQIEMTIESIKKAIKEKSAFLKVAQTRLDERTRRPNVELCRDMAQLRLVNEVYEVDETIQTLQQRLRDSEDTLQSLAHTKATLEHDLAVKANTLYIDQEKCMSMRNSYPSTLRLVGYC</sequence>
<gene>
    <name type="primary">Tekt3</name>
</gene>
<accession>Q6X6Z7</accession>